<evidence type="ECO:0000250" key="1"/>
<evidence type="ECO:0000255" key="2"/>
<evidence type="ECO:0000255" key="3">
    <source>
        <dbReference type="PROSITE-ProRule" id="PRU00031"/>
    </source>
</evidence>
<evidence type="ECO:0000255" key="4">
    <source>
        <dbReference type="PROSITE-ProRule" id="PRU00219"/>
    </source>
</evidence>
<evidence type="ECO:0000255" key="5">
    <source>
        <dbReference type="PROSITE-ProRule" id="PRU00316"/>
    </source>
</evidence>
<evidence type="ECO:0000256" key="6">
    <source>
        <dbReference type="SAM" id="MobiDB-lite"/>
    </source>
</evidence>
<evidence type="ECO:0000305" key="7"/>
<protein>
    <recommendedName>
        <fullName>Collagen alpha-3(VI) chain</fullName>
    </recommendedName>
</protein>
<name>CO6A3_CHICK</name>
<dbReference type="EMBL" id="M24282">
    <property type="protein sequence ID" value="AAA03201.1"/>
    <property type="molecule type" value="mRNA"/>
</dbReference>
<dbReference type="PIR" id="A37797">
    <property type="entry name" value="A37797"/>
</dbReference>
<dbReference type="SMR" id="P15989"/>
<dbReference type="FunCoup" id="P15989">
    <property type="interactions" value="1145"/>
</dbReference>
<dbReference type="STRING" id="9031.ENSGALP00000071197"/>
<dbReference type="GlyCosmos" id="P15989">
    <property type="glycosylation" value="7 sites, No reported glycans"/>
</dbReference>
<dbReference type="GlyGen" id="P15989">
    <property type="glycosylation" value="8 sites"/>
</dbReference>
<dbReference type="PaxDb" id="9031-ENSGALP00000006240"/>
<dbReference type="VEuPathDB" id="HostDB:geneid_396548"/>
<dbReference type="eggNOG" id="KOG3544">
    <property type="taxonomic scope" value="Eukaryota"/>
</dbReference>
<dbReference type="InParanoid" id="P15989"/>
<dbReference type="OrthoDB" id="6132182at2759"/>
<dbReference type="PhylomeDB" id="P15989"/>
<dbReference type="Proteomes" id="UP000000539">
    <property type="component" value="Unassembled WGS sequence"/>
</dbReference>
<dbReference type="GO" id="GO:0005581">
    <property type="term" value="C:collagen trimer"/>
    <property type="evidence" value="ECO:0007669"/>
    <property type="project" value="UniProtKB-KW"/>
</dbReference>
<dbReference type="GO" id="GO:0005615">
    <property type="term" value="C:extracellular space"/>
    <property type="evidence" value="ECO:0000318"/>
    <property type="project" value="GO_Central"/>
</dbReference>
<dbReference type="GO" id="GO:0004867">
    <property type="term" value="F:serine-type endopeptidase inhibitor activity"/>
    <property type="evidence" value="ECO:0007669"/>
    <property type="project" value="UniProtKB-KW"/>
</dbReference>
<dbReference type="GO" id="GO:0007155">
    <property type="term" value="P:cell adhesion"/>
    <property type="evidence" value="ECO:0007669"/>
    <property type="project" value="UniProtKB-KW"/>
</dbReference>
<dbReference type="CDD" id="cd00063">
    <property type="entry name" value="FN3"/>
    <property type="match status" value="1"/>
</dbReference>
<dbReference type="CDD" id="cd22629">
    <property type="entry name" value="Kunitz_collagen_alpha3_VI"/>
    <property type="match status" value="1"/>
</dbReference>
<dbReference type="CDD" id="cd01481">
    <property type="entry name" value="vWA_collagen_alpha3-VI-like"/>
    <property type="match status" value="6"/>
</dbReference>
<dbReference type="CDD" id="cd01482">
    <property type="entry name" value="vWA_collagen_alphaI-XII-like"/>
    <property type="match status" value="1"/>
</dbReference>
<dbReference type="CDD" id="cd01450">
    <property type="entry name" value="vWFA_subfamily_ECM"/>
    <property type="match status" value="2"/>
</dbReference>
<dbReference type="FunFam" id="2.60.40.10:FF:002370">
    <property type="entry name" value="Collagen alpha-3(VI) chain"/>
    <property type="match status" value="1"/>
</dbReference>
<dbReference type="FunFam" id="3.40.50.410:FF:000035">
    <property type="entry name" value="collagen alpha-3(VI) chain isoform X3"/>
    <property type="match status" value="1"/>
</dbReference>
<dbReference type="FunFam" id="3.40.50.410:FF:000004">
    <property type="entry name" value="collagen alpha-6(VI) chain"/>
    <property type="match status" value="1"/>
</dbReference>
<dbReference type="FunFam" id="3.40.50.410:FF:000003">
    <property type="entry name" value="Collagen type VI alpha 3 chain"/>
    <property type="match status" value="6"/>
</dbReference>
<dbReference type="FunFam" id="3.40.50.410:FF:000016">
    <property type="entry name" value="Collagen type VI alpha 3 chain"/>
    <property type="match status" value="1"/>
</dbReference>
<dbReference type="FunFam" id="3.40.50.410:FF:000022">
    <property type="entry name" value="Collagen type VI alpha 3 chain"/>
    <property type="match status" value="1"/>
</dbReference>
<dbReference type="FunFam" id="3.40.50.410:FF:000037">
    <property type="entry name" value="Collagen type VI alpha 3 chain"/>
    <property type="match status" value="1"/>
</dbReference>
<dbReference type="FunFam" id="4.10.410.10:FF:000007">
    <property type="entry name" value="Collagen type VI alpha 3 chain"/>
    <property type="match status" value="1"/>
</dbReference>
<dbReference type="FunFam" id="3.40.50.410:FF:000021">
    <property type="entry name" value="Collagen, type VI, alpha 3"/>
    <property type="match status" value="1"/>
</dbReference>
<dbReference type="Gene3D" id="2.60.40.10">
    <property type="entry name" value="Immunoglobulins"/>
    <property type="match status" value="1"/>
</dbReference>
<dbReference type="Gene3D" id="4.10.410.10">
    <property type="entry name" value="Pancreatic trypsin inhibitor Kunitz domain"/>
    <property type="match status" value="1"/>
</dbReference>
<dbReference type="Gene3D" id="3.40.50.410">
    <property type="entry name" value="von Willebrand factor, type A domain"/>
    <property type="match status" value="11"/>
</dbReference>
<dbReference type="InterPro" id="IPR008160">
    <property type="entry name" value="Collagen"/>
</dbReference>
<dbReference type="InterPro" id="IPR050525">
    <property type="entry name" value="ECM_Assembly_Org"/>
</dbReference>
<dbReference type="InterPro" id="IPR003961">
    <property type="entry name" value="FN3_dom"/>
</dbReference>
<dbReference type="InterPro" id="IPR036116">
    <property type="entry name" value="FN3_sf"/>
</dbReference>
<dbReference type="InterPro" id="IPR013783">
    <property type="entry name" value="Ig-like_fold"/>
</dbReference>
<dbReference type="InterPro" id="IPR002223">
    <property type="entry name" value="Kunitz_BPTI"/>
</dbReference>
<dbReference type="InterPro" id="IPR036880">
    <property type="entry name" value="Kunitz_BPTI_sf"/>
</dbReference>
<dbReference type="InterPro" id="IPR020901">
    <property type="entry name" value="Prtase_inh_Kunz-CS"/>
</dbReference>
<dbReference type="InterPro" id="IPR041900">
    <property type="entry name" value="vWA_collagen_alpha3-VI-like"/>
</dbReference>
<dbReference type="InterPro" id="IPR002035">
    <property type="entry name" value="VWF_A"/>
</dbReference>
<dbReference type="InterPro" id="IPR036465">
    <property type="entry name" value="vWFA_dom_sf"/>
</dbReference>
<dbReference type="PANTHER" id="PTHR24020">
    <property type="entry name" value="COLLAGEN ALPHA"/>
    <property type="match status" value="1"/>
</dbReference>
<dbReference type="PANTHER" id="PTHR24020:SF20">
    <property type="entry name" value="PH DOMAIN-CONTAINING PROTEIN"/>
    <property type="match status" value="1"/>
</dbReference>
<dbReference type="Pfam" id="PF01391">
    <property type="entry name" value="Collagen"/>
    <property type="match status" value="3"/>
</dbReference>
<dbReference type="Pfam" id="PF00014">
    <property type="entry name" value="Kunitz_BPTI"/>
    <property type="match status" value="1"/>
</dbReference>
<dbReference type="Pfam" id="PF00092">
    <property type="entry name" value="VWA"/>
    <property type="match status" value="11"/>
</dbReference>
<dbReference type="PRINTS" id="PR00759">
    <property type="entry name" value="BASICPTASE"/>
</dbReference>
<dbReference type="PRINTS" id="PR00453">
    <property type="entry name" value="VWFADOMAIN"/>
</dbReference>
<dbReference type="SMART" id="SM00131">
    <property type="entry name" value="KU"/>
    <property type="match status" value="1"/>
</dbReference>
<dbReference type="SMART" id="SM00327">
    <property type="entry name" value="VWA"/>
    <property type="match status" value="12"/>
</dbReference>
<dbReference type="SUPFAM" id="SSF57362">
    <property type="entry name" value="BPTI-like"/>
    <property type="match status" value="1"/>
</dbReference>
<dbReference type="SUPFAM" id="SSF49265">
    <property type="entry name" value="Fibronectin type III"/>
    <property type="match status" value="1"/>
</dbReference>
<dbReference type="SUPFAM" id="SSF53300">
    <property type="entry name" value="vWA-like"/>
    <property type="match status" value="12"/>
</dbReference>
<dbReference type="PROSITE" id="PS00280">
    <property type="entry name" value="BPTI_KUNITZ_1"/>
    <property type="match status" value="1"/>
</dbReference>
<dbReference type="PROSITE" id="PS50279">
    <property type="entry name" value="BPTI_KUNITZ_2"/>
    <property type="match status" value="1"/>
</dbReference>
<dbReference type="PROSITE" id="PS50853">
    <property type="entry name" value="FN3"/>
    <property type="match status" value="1"/>
</dbReference>
<dbReference type="PROSITE" id="PS50234">
    <property type="entry name" value="VWFA"/>
    <property type="match status" value="12"/>
</dbReference>
<gene>
    <name type="primary">COL6A3</name>
</gene>
<reference key="1">
    <citation type="journal article" date="1990" name="J. Cell Biol.">
        <title>Multiple forms of chicken alpha 3(VI) collagen chain generated by alternative splicing in type A repeated domains.</title>
        <authorList>
            <person name="Doliana R."/>
            <person name="Bonaldo P."/>
            <person name="Colombatti A."/>
        </authorList>
    </citation>
    <scope>NUCLEOTIDE SEQUENCE [MRNA] OF 1-853</scope>
    <source>
        <tissue>Aorta</tissue>
    </source>
</reference>
<reference key="2">
    <citation type="journal article" date="1990" name="Biochemistry">
        <title>Structural and functional features of the alpha 3 chain indicate a bridging role for chicken collagen VI in connective tissues.</title>
        <authorList>
            <person name="Bonaldo P."/>
            <person name="Russo V."/>
            <person name="Bucciotti F."/>
            <person name="Doliana R."/>
            <person name="Colombatti A."/>
        </authorList>
    </citation>
    <scope>NUCLEOTIDE SEQUENCE [MRNA] OF 224-2871</scope>
</reference>
<reference key="3">
    <citation type="journal article" date="1989" name="J. Biol. Chem.">
        <title>The carboxyl terminus of the chicken alpha 3 chain of collagen VI is a unique mosaic structure with glycoprotein Ib-like, fibronectin type III, and Kunitz modules.</title>
        <authorList>
            <person name="Bonaldo P."/>
            <person name="Colombatti A."/>
        </authorList>
    </citation>
    <scope>NUCLEOTIDE SEQUENCE [MRNA] OF 2871-3137</scope>
</reference>
<feature type="signal peptide" evidence="2">
    <location>
        <begin position="1"/>
        <end position="25"/>
    </location>
</feature>
<feature type="chain" id="PRO_0000005846" description="Collagen alpha-3(VI) chain">
    <location>
        <begin position="26"/>
        <end position="3137"/>
    </location>
</feature>
<feature type="domain" description="VWFA 1" evidence="4">
    <location>
        <begin position="38"/>
        <end position="212"/>
    </location>
</feature>
<feature type="domain" description="VWFA 2" evidence="4">
    <location>
        <begin position="241"/>
        <end position="418"/>
    </location>
</feature>
<feature type="domain" description="VWFA 3" evidence="4">
    <location>
        <begin position="444"/>
        <end position="623"/>
    </location>
</feature>
<feature type="domain" description="VWFA 4" evidence="4">
    <location>
        <begin position="644"/>
        <end position="817"/>
    </location>
</feature>
<feature type="domain" description="VWFA 5" evidence="4">
    <location>
        <begin position="842"/>
        <end position="1014"/>
    </location>
</feature>
<feature type="domain" description="VWFA 6" evidence="4">
    <location>
        <begin position="1035"/>
        <end position="1207"/>
    </location>
</feature>
<feature type="domain" description="VWFA 7" evidence="4">
    <location>
        <begin position="1239"/>
        <end position="1410"/>
    </location>
</feature>
<feature type="domain" description="VWFA 8" evidence="4">
    <location>
        <begin position="1441"/>
        <end position="1621"/>
    </location>
</feature>
<feature type="domain" description="VWFA 9" evidence="4">
    <location>
        <begin position="1641"/>
        <end position="1814"/>
    </location>
</feature>
<feature type="domain" description="VWFA 10" evidence="4">
    <location>
        <begin position="1840"/>
        <end position="2029"/>
    </location>
</feature>
<feature type="domain" description="VWFA 11" evidence="4">
    <location>
        <begin position="2407"/>
        <end position="2587"/>
    </location>
</feature>
<feature type="domain" description="VWFA 12" evidence="4">
    <location>
        <begin position="2625"/>
        <end position="2821"/>
    </location>
</feature>
<feature type="domain" description="Fibronectin type-III" evidence="5">
    <location>
        <begin position="2957"/>
        <end position="3051"/>
    </location>
</feature>
<feature type="domain" description="BPTI/Kunitz inhibitor" evidence="3">
    <location>
        <begin position="3068"/>
        <end position="3137"/>
    </location>
</feature>
<feature type="region of interest" description="Nonhelical region">
    <location>
        <begin position="26"/>
        <end position="2042"/>
    </location>
</feature>
<feature type="region of interest" description="Triple-helical region">
    <location>
        <begin position="2043"/>
        <end position="2379"/>
    </location>
</feature>
<feature type="region of interest" description="Disordered" evidence="6">
    <location>
        <begin position="2045"/>
        <end position="2372"/>
    </location>
</feature>
<feature type="region of interest" description="Interruption in collagenous region">
    <location>
        <begin position="2166"/>
        <end position="2172"/>
    </location>
</feature>
<feature type="region of interest" description="Interruption in collagenous region">
    <location>
        <begin position="2254"/>
        <end position="2259"/>
    </location>
</feature>
<feature type="region of interest" description="Interruption in collagenous region">
    <location>
        <begin position="2308"/>
        <end position="2309"/>
    </location>
</feature>
<feature type="region of interest" description="Nonhelical region">
    <location>
        <begin position="2380"/>
        <end position="3137"/>
    </location>
</feature>
<feature type="region of interest" description="Disordered" evidence="6">
    <location>
        <begin position="2887"/>
        <end position="2956"/>
    </location>
</feature>
<feature type="short sequence motif" description="Cell attachment site">
    <location>
        <begin position="2045"/>
        <end position="2047"/>
    </location>
</feature>
<feature type="short sequence motif" description="Cell attachment site">
    <location>
        <begin position="2153"/>
        <end position="2155"/>
    </location>
</feature>
<feature type="short sequence motif" description="Cell attachment site">
    <location>
        <begin position="2159"/>
        <end position="2161"/>
    </location>
</feature>
<feature type="compositionally biased region" description="Gly residues" evidence="6">
    <location>
        <begin position="2061"/>
        <end position="2079"/>
    </location>
</feature>
<feature type="compositionally biased region" description="Basic and acidic residues" evidence="6">
    <location>
        <begin position="2146"/>
        <end position="2162"/>
    </location>
</feature>
<feature type="compositionally biased region" description="Gly residues" evidence="6">
    <location>
        <begin position="2194"/>
        <end position="2203"/>
    </location>
</feature>
<feature type="compositionally biased region" description="Low complexity" evidence="6">
    <location>
        <begin position="2228"/>
        <end position="2255"/>
    </location>
</feature>
<feature type="compositionally biased region" description="Gly residues" evidence="6">
    <location>
        <begin position="2325"/>
        <end position="2343"/>
    </location>
</feature>
<feature type="compositionally biased region" description="Low complexity" evidence="6">
    <location>
        <begin position="2887"/>
        <end position="2906"/>
    </location>
</feature>
<feature type="compositionally biased region" description="Polar residues" evidence="6">
    <location>
        <begin position="2913"/>
        <end position="2927"/>
    </location>
</feature>
<feature type="compositionally biased region" description="Low complexity" evidence="6">
    <location>
        <begin position="2928"/>
        <end position="2949"/>
    </location>
</feature>
<feature type="site" description="Reactive bond" evidence="1">
    <location>
        <begin position="3082"/>
        <end position="3083"/>
    </location>
</feature>
<feature type="glycosylation site" description="N-linked (GlcNAc...) asparagine" evidence="2">
    <location>
        <position position="201"/>
    </location>
</feature>
<feature type="glycosylation site" description="N-linked (GlcNAc...) asparagine" evidence="2">
    <location>
        <position position="2084"/>
    </location>
</feature>
<feature type="glycosylation site" description="N-linked (GlcNAc...) asparagine" evidence="2">
    <location>
        <position position="2436"/>
    </location>
</feature>
<feature type="glycosylation site" description="N-linked (GlcNAc...) asparagine" evidence="2">
    <location>
        <position position="2563"/>
    </location>
</feature>
<feature type="glycosylation site" description="N-linked (GlcNAc...) asparagine" evidence="2">
    <location>
        <position position="2581"/>
    </location>
</feature>
<feature type="glycosylation site" description="N-linked (GlcNAc...) asparagine" evidence="2">
    <location>
        <position position="2683"/>
    </location>
</feature>
<feature type="glycosylation site" description="N-linked (GlcNAc...) asparagine" evidence="2">
    <location>
        <position position="2867"/>
    </location>
</feature>
<feature type="disulfide bond" evidence="3">
    <location>
        <begin position="3072"/>
        <end position="3122"/>
    </location>
</feature>
<feature type="disulfide bond" evidence="3">
    <location>
        <begin position="3081"/>
        <end position="3105"/>
    </location>
</feature>
<feature type="disulfide bond" evidence="3">
    <location>
        <begin position="3097"/>
        <end position="3118"/>
    </location>
</feature>
<sequence>MRKHRHLPLAAILGLLLSGFCSVGAQQQAAVRNVAVADIIFLVDSSWSIGKEHFQLVREFLYDVVKALDVGGNDFRFALVQFSGNPHTEFQLNTYPSNQDVLSHIANMPYMGGGSKTGKGLEYLIENHLTKAAGSRASEGVPQVIIVLTDGQSQDDVALPSSVLKSAHVNMIAVGVQDAVEGELKEIASRPFDTHLFNLENFTALHGIVGDLVASVRTSMTPEQAGAKGLVKDITAQESADLIFLIDGSDNIGSVNFQAIRDFLVNLIESLRVGAQQIHIGVVQYSDQPRTEFALNSYSTKADVLDAVKALSFRGGKEANTGAALEYVVENLFTQAGGSRIEEAVPQILVLISGGESSDDIREGLLAVKQASIFSFSIGVLNADSAELQQIATDGSFAFTALDIRNLAALRELLLPNIVGVAQRLILLEAPTIVTEVIEVNKKDIVFLIDGSTALGTGPFNSIRDFVAKIVQRLEVGPDLIQVAVAQYADTVRPEFYFNTHQNRKDVMANVKKMKLMGGTALNTGSALDFVRNNFFTSAAGCRMEEGVLPMLVLITGGKSMDAVEQAAAEMKRNRIVILAVGSRNADVAELQEIAHERDFVFQPNDFRLQFMQAILPEVLSPIRTLSGGMVIHETPSVQVTKRDIIFLLDGSLNVGNANFPFVRDFVVTLVNYLDVGTDKIRVGLVQFSDTPKTEFSLYSYQTKSDIIQRLGQLRPKGGSVLNTGSALNFVLSNHFTEAGGSRINEQVPQVLVLVTAGRSAVPFLQVSNDLARAGVLTFAVGVRNADKAELEQIAFNPKMVYFMDDFSDLTTLPQELKKPITTIVSGGVEEVPLAPTESKKDILFLIDGSANLLGSFPAVRDFIHKVISDLNVGPDATRVAVAQFSDNIQIEFDFAELPSKQDMLLKVKRMRLKTGKQLNIGVALDEVMRRLFVKEAGSRIEEGIPQFLVLLAAGRSTDEVERPSGALKEAGVVTFAIKAKNADLSELERIAYAPQFILNVESLPRISELQANIVNLLKTIQFQPTVVERGEKKDVVFLIDGSDGVRRGFPLLKTFVERVVESLDIGRDKVRVAIVQYSNAIQPEFLLDAYEDKADLVSAIQALTIMGGSPLNTGAALDYLIKNVFTVSSGSRIAEGVPQFLILLTADRSQDDVRRPSVVLKTSGTVPFGIGIGNADLTELQTISFLPDFAISVPDFSQLDSVQQAVSNRVIRLTKKEIESLAPDLVFTSPSPVGVKRDVVFLVDGSRYAAQEFYLIRDLIERIVNNLDVGFDTTRISVVQFSEHPHVEFLLNAHSTKDEVQGAVRRLRPRGGQQVNVGEALEFVAKTIFTRPSGSRIEEGVPQFLVILSSRKSDDDLEFPSVQVKQVGVAPMVIAKNMDPEEMVQISLSPDYVFQVSSFQELPSLEQKLLAPIETLTADQIRQLLGDVTTIPDVSGEEKDVVFLIDSSDSVRSDGLAHIRDFISRIVQQLDVGPNKVRIGVVQFSNNVFPEFYLRTHKSKNAVLQAIRRLRLRGGYPVNAGKALDYVVKNYFIKSAGSRIEDGVPQHLVVILGDQSQDDVNRPANVISSTSIQPLGVGARNVDRNQLQVITNDPGRVLVVQDFTGLPTLERKVQNILEELTVPTTEGPVYPGPEGKKQADIVFLLDGSINLGRDNFQEVLQFVYSIVDAIYEDGDSIQVGLAQYNSDVTDEFFLKDYSSKPEILDAINKVIYKGGRVANTGAAIKHLQAKHFVKEAGSRIDQRVPQIAFIITGGKSSDDGQGASMEVAQKGVKVFAVGVRNIDLEEVSKLASESATSFRVSTAQELSELNEQVLVTLAAAMKEKLCPGTTDVTRDCDLDVILGFDVSDVGAGQNIFNSQRGLESRVEAVLNRITQMQKISCTGSRAPSVRVAIMAQSRGGPVEGLDFSEYQPELFERFQGMRTRGPYFLTAETLKSYQNKFRSAPSGSTKVVIHFTDGTDDYLDQMKTASADLRRQGVHALLFVGLDRVKNFEEVMQLEFGRGFTYNRPLRVNLLDLDFELAEQLDNIAERTCCGVPCKCSGQRGDRGLPGPIGPKGATGEIGYGGYPGDEGGPGERGPPGVNGTQGFQGCPGHRGTKGSRGFPGEKGELGEMGLDGIDGEEGDKGLPGFSGEKGFSGRRGSKGAKGERGERGDRGLRGDPGESGADNTQRGTRGQKGEIGQMGEPGPAGQRGQDGGVGRKGMAGRRGPIGVKGTKGALGQPGPAGEQGMRGPQGPPGQIGTPGIRGEQGIPGPRAGGGQPGAPGERGRIGPLGRKGEPGNPGPRGPNGQQGPRGEMGDDGRDGIGGPGPKGRKGERGFVGYPGPKGGPGDRGGAGGPGPKGNRGRRGNAGNPGTPGQKGEIGYPGPSGLKGDKGPSISQCALVQNIKDKCPCCYGPKECPVFPTELAFAIDTSSGVGRDVFNRMKQTVLRVVSNLTIAESNCPRGARVALVTYNNEVTTEIRFADARKKSSLLQQIQNFQATLTTKPRSLETAMSFVARNTFKRARSGFLMRKVAVFFSNGETRASPQLNDAVLKLYDAGVTPVFLTSRQDAVLERALEINNTAVGHAIVLPTSGSQLNDTIRRLLTCHVCLDVCEPDPICGYGSQRPVFRDRRAAPTDVDTDIAFIMDSSASTTPLQFNEMKKYISHLVSNMEISSEPKISQHHARVAVLQQAPYDHETNSSFPPVKTEFSLTDYGSKEKIINYLHNQMTQLYGTMAMGSAVEHTVAHVFESAPNPRDLKVIVLMITGKMEKQELEYLREAVIDAKCKGYLFVILGIGKNVDVKNIYSLASEPNDVFFKLVSKPGELHEEPLLRFGRLLPSFIRSDFAFYLSPEIRKQCKWLQADQTPKSPGHTGQKAVYIAPNGTVTQTISTTTTLSTTFKPAASTSAHAKTTTASTTAQTRATERPTESTTVQVNATVQSQGSTAANTKATSRTTTSTTAAAASGRRRQGAKMNDIQITDVTENSARLRWASPEPHNAYVFDLAITLAHDHSLVLKQNVTGTERVIGGLRSGQKYLVFITGYLKSQPKVTYTGTFSTKTPAQPKVALANMMLNAEPLEGPENVMDICLLQKEEGTCRDFVLKWHYDLKTKSCARFWYGGCGGNENRFNTQKECEKACSPGNISPGVVTTIGT</sequence>
<proteinExistence type="evidence at transcript level"/>
<comment type="function">
    <text>Collagen VI acts as a cell-binding protein.</text>
</comment>
<comment type="subunit">
    <text>Trimers composed of three different chains: alpha 1(VI), alpha 2(VI), and alpha 3(VI).</text>
</comment>
<comment type="subcellular location">
    <subcellularLocation>
        <location evidence="1">Secreted</location>
        <location evidence="1">Extracellular space</location>
        <location evidence="1">Extracellular matrix</location>
    </subcellularLocation>
</comment>
<comment type="alternative products">
    <event type="alternative splicing"/>
    <isoform>
        <id>P15989-1</id>
        <name>1</name>
        <sequence type="displayed"/>
    </isoform>
    <text>At least 2 isoforms are produced.</text>
</comment>
<comment type="PTM">
    <text>Prolines at the third position of the tripeptide repeating unit (G-X-Y) are hydroxylated in some or all of the chains.</text>
</comment>
<comment type="similarity">
    <text evidence="7">Belongs to the type VI collagen family.</text>
</comment>
<keyword id="KW-0025">Alternative splicing</keyword>
<keyword id="KW-0130">Cell adhesion</keyword>
<keyword id="KW-0176">Collagen</keyword>
<keyword id="KW-1015">Disulfide bond</keyword>
<keyword id="KW-0272">Extracellular matrix</keyword>
<keyword id="KW-0325">Glycoprotein</keyword>
<keyword id="KW-0379">Hydroxylation</keyword>
<keyword id="KW-0646">Protease inhibitor</keyword>
<keyword id="KW-1185">Reference proteome</keyword>
<keyword id="KW-0677">Repeat</keyword>
<keyword id="KW-0964">Secreted</keyword>
<keyword id="KW-0722">Serine protease inhibitor</keyword>
<keyword id="KW-0732">Signal</keyword>
<accession>P15989</accession>
<organism>
    <name type="scientific">Gallus gallus</name>
    <name type="common">Chicken</name>
    <dbReference type="NCBI Taxonomy" id="9031"/>
    <lineage>
        <taxon>Eukaryota</taxon>
        <taxon>Metazoa</taxon>
        <taxon>Chordata</taxon>
        <taxon>Craniata</taxon>
        <taxon>Vertebrata</taxon>
        <taxon>Euteleostomi</taxon>
        <taxon>Archelosauria</taxon>
        <taxon>Archosauria</taxon>
        <taxon>Dinosauria</taxon>
        <taxon>Saurischia</taxon>
        <taxon>Theropoda</taxon>
        <taxon>Coelurosauria</taxon>
        <taxon>Aves</taxon>
        <taxon>Neognathae</taxon>
        <taxon>Galloanserae</taxon>
        <taxon>Galliformes</taxon>
        <taxon>Phasianidae</taxon>
        <taxon>Phasianinae</taxon>
        <taxon>Gallus</taxon>
    </lineage>
</organism>